<gene>
    <name type="primary">moeA</name>
    <name type="synonym">chlE</name>
    <name type="ordered locus">HI_1448</name>
</gene>
<evidence type="ECO:0000250" key="1"/>
<evidence type="ECO:0000305" key="2"/>
<comment type="function">
    <text evidence="1">Catalyzes the insertion of molybdate into adenylated molybdopterin with the concomitant release of AMP.</text>
</comment>
<comment type="catalytic activity">
    <reaction>
        <text>adenylyl-molybdopterin + molybdate = Mo-molybdopterin + AMP + H(+)</text>
        <dbReference type="Rhea" id="RHEA:35047"/>
        <dbReference type="ChEBI" id="CHEBI:15378"/>
        <dbReference type="ChEBI" id="CHEBI:36264"/>
        <dbReference type="ChEBI" id="CHEBI:62727"/>
        <dbReference type="ChEBI" id="CHEBI:71302"/>
        <dbReference type="ChEBI" id="CHEBI:456215"/>
        <dbReference type="EC" id="2.10.1.1"/>
    </reaction>
</comment>
<comment type="cofactor">
    <cofactor evidence="1">
        <name>Mg(2+)</name>
        <dbReference type="ChEBI" id="CHEBI:18420"/>
    </cofactor>
    <text evidence="1">Binds 1 Mg(2+) ion per subunit.</text>
</comment>
<comment type="pathway">
    <text>Cofactor biosynthesis; molybdopterin biosynthesis.</text>
</comment>
<comment type="similarity">
    <text evidence="2">Belongs to the MoeA family.</text>
</comment>
<proteinExistence type="inferred from homology"/>
<feature type="chain" id="PRO_0000170990" description="Molybdopterin molybdenumtransferase">
    <location>
        <begin position="1"/>
        <end position="404"/>
    </location>
</feature>
<sequence>MLTLDQARSKMLEQLPFPTQTEYLNLQEAANRICAEDIISPINVPSFDNSAMDGYAVRLSDLQQSLTLSVAGKSFAGNPFQEEWPSKSAVRIMTGAMIPEGTDAVIMQEQVTLNEDGTITFSELPKPNQNIRRIGEDVKKGDVVLEQGAQLTPVSLPLLASLGIAEVKCYRQLKVGVLSTGDELVEVGKPLQSGQIYDTNRFTVKLLLEKLHCEVIDLGLLPDNEAEFEKAFIAAQSQADLVITSGGVSVGEADFTKAVLEKVGQVNFWKIAIKPGKPFAFGKLENAWFCGLPGNPVSALVTFYQLVQPLIAKLQGQKQWKKPPHFSAIATMNLKKAVGRLDFQRGFYYINEQGQIEVQSVGFQGSHLFSAFVKSNCFIVLEQERGNVSAGETVTIEPFNHLLG</sequence>
<organism>
    <name type="scientific">Haemophilus influenzae (strain ATCC 51907 / DSM 11121 / KW20 / Rd)</name>
    <dbReference type="NCBI Taxonomy" id="71421"/>
    <lineage>
        <taxon>Bacteria</taxon>
        <taxon>Pseudomonadati</taxon>
        <taxon>Pseudomonadota</taxon>
        <taxon>Gammaproteobacteria</taxon>
        <taxon>Pasteurellales</taxon>
        <taxon>Pasteurellaceae</taxon>
        <taxon>Haemophilus</taxon>
    </lineage>
</organism>
<accession>P45210</accession>
<reference key="1">
    <citation type="journal article" date="1995" name="Science">
        <title>Whole-genome random sequencing and assembly of Haemophilus influenzae Rd.</title>
        <authorList>
            <person name="Fleischmann R.D."/>
            <person name="Adams M.D."/>
            <person name="White O."/>
            <person name="Clayton R.A."/>
            <person name="Kirkness E.F."/>
            <person name="Kerlavage A.R."/>
            <person name="Bult C.J."/>
            <person name="Tomb J.-F."/>
            <person name="Dougherty B.A."/>
            <person name="Merrick J.M."/>
            <person name="McKenney K."/>
            <person name="Sutton G.G."/>
            <person name="FitzHugh W."/>
            <person name="Fields C.A."/>
            <person name="Gocayne J.D."/>
            <person name="Scott J.D."/>
            <person name="Shirley R."/>
            <person name="Liu L.-I."/>
            <person name="Glodek A."/>
            <person name="Kelley J.M."/>
            <person name="Weidman J.F."/>
            <person name="Phillips C.A."/>
            <person name="Spriggs T."/>
            <person name="Hedblom E."/>
            <person name="Cotton M.D."/>
            <person name="Utterback T.R."/>
            <person name="Hanna M.C."/>
            <person name="Nguyen D.T."/>
            <person name="Saudek D.M."/>
            <person name="Brandon R.C."/>
            <person name="Fine L.D."/>
            <person name="Fritchman J.L."/>
            <person name="Fuhrmann J.L."/>
            <person name="Geoghagen N.S.M."/>
            <person name="Gnehm C.L."/>
            <person name="McDonald L.A."/>
            <person name="Small K.V."/>
            <person name="Fraser C.M."/>
            <person name="Smith H.O."/>
            <person name="Venter J.C."/>
        </authorList>
    </citation>
    <scope>NUCLEOTIDE SEQUENCE [LARGE SCALE GENOMIC DNA]</scope>
    <source>
        <strain>ATCC 51907 / DSM 11121 / KW20 / Rd</strain>
    </source>
</reference>
<keyword id="KW-0460">Magnesium</keyword>
<keyword id="KW-0479">Metal-binding</keyword>
<keyword id="KW-0500">Molybdenum</keyword>
<keyword id="KW-0501">Molybdenum cofactor biosynthesis</keyword>
<keyword id="KW-1185">Reference proteome</keyword>
<keyword id="KW-0808">Transferase</keyword>
<protein>
    <recommendedName>
        <fullName>Molybdopterin molybdenumtransferase</fullName>
        <shortName>MPT Mo-transferase</shortName>
        <ecNumber>2.10.1.1</ecNumber>
    </recommendedName>
</protein>
<name>MOEA_HAEIN</name>
<dbReference type="EC" id="2.10.1.1"/>
<dbReference type="EMBL" id="L42023">
    <property type="protein sequence ID" value="AAC23098.1"/>
    <property type="molecule type" value="Genomic_DNA"/>
</dbReference>
<dbReference type="PIR" id="B64124">
    <property type="entry name" value="B64124"/>
</dbReference>
<dbReference type="RefSeq" id="NP_439600.1">
    <property type="nucleotide sequence ID" value="NC_000907.1"/>
</dbReference>
<dbReference type="SMR" id="P45210"/>
<dbReference type="STRING" id="71421.HI_1448"/>
<dbReference type="EnsemblBacteria" id="AAC23098">
    <property type="protein sequence ID" value="AAC23098"/>
    <property type="gene ID" value="HI_1448"/>
</dbReference>
<dbReference type="KEGG" id="hin:HI_1448"/>
<dbReference type="PATRIC" id="fig|71421.8.peg.1510"/>
<dbReference type="eggNOG" id="COG0303">
    <property type="taxonomic scope" value="Bacteria"/>
</dbReference>
<dbReference type="HOGENOM" id="CLU_010186_7_0_6"/>
<dbReference type="OrthoDB" id="9804758at2"/>
<dbReference type="PhylomeDB" id="P45210"/>
<dbReference type="BioCyc" id="HINF71421:G1GJ1-1474-MONOMER"/>
<dbReference type="UniPathway" id="UPA00344"/>
<dbReference type="Proteomes" id="UP000000579">
    <property type="component" value="Chromosome"/>
</dbReference>
<dbReference type="GO" id="GO:0005737">
    <property type="term" value="C:cytoplasm"/>
    <property type="evidence" value="ECO:0000318"/>
    <property type="project" value="GO_Central"/>
</dbReference>
<dbReference type="GO" id="GO:0005829">
    <property type="term" value="C:cytosol"/>
    <property type="evidence" value="ECO:0000318"/>
    <property type="project" value="GO_Central"/>
</dbReference>
<dbReference type="GO" id="GO:0046872">
    <property type="term" value="F:metal ion binding"/>
    <property type="evidence" value="ECO:0007669"/>
    <property type="project" value="UniProtKB-KW"/>
</dbReference>
<dbReference type="GO" id="GO:0061599">
    <property type="term" value="F:molybdopterin molybdotransferase activity"/>
    <property type="evidence" value="ECO:0000318"/>
    <property type="project" value="GO_Central"/>
</dbReference>
<dbReference type="GO" id="GO:0006777">
    <property type="term" value="P:Mo-molybdopterin cofactor biosynthetic process"/>
    <property type="evidence" value="ECO:0000318"/>
    <property type="project" value="GO_Central"/>
</dbReference>
<dbReference type="CDD" id="cd00887">
    <property type="entry name" value="MoeA"/>
    <property type="match status" value="1"/>
</dbReference>
<dbReference type="FunFam" id="2.170.190.11:FF:000001">
    <property type="entry name" value="Molybdopterin molybdenumtransferase"/>
    <property type="match status" value="1"/>
</dbReference>
<dbReference type="FunFam" id="2.40.340.10:FF:000003">
    <property type="entry name" value="Molybdopterin molybdenumtransferase"/>
    <property type="match status" value="1"/>
</dbReference>
<dbReference type="FunFam" id="3.40.980.10:FF:000004">
    <property type="entry name" value="Molybdopterin molybdenumtransferase"/>
    <property type="match status" value="1"/>
</dbReference>
<dbReference type="Gene3D" id="3.40.980.10">
    <property type="entry name" value="MoaB/Mog-like domain"/>
    <property type="match status" value="1"/>
</dbReference>
<dbReference type="Gene3D" id="2.40.340.10">
    <property type="entry name" value="MoeA, C-terminal, domain IV"/>
    <property type="match status" value="1"/>
</dbReference>
<dbReference type="Gene3D" id="3.90.105.10">
    <property type="entry name" value="Molybdopterin biosynthesis moea protein, domain 2"/>
    <property type="match status" value="1"/>
</dbReference>
<dbReference type="Gene3D" id="2.170.190.11">
    <property type="entry name" value="Molybdopterin biosynthesis moea protein, domain 3"/>
    <property type="match status" value="1"/>
</dbReference>
<dbReference type="InterPro" id="IPR036425">
    <property type="entry name" value="MoaB/Mog-like_dom_sf"/>
</dbReference>
<dbReference type="InterPro" id="IPR001453">
    <property type="entry name" value="MoaB/Mog_dom"/>
</dbReference>
<dbReference type="InterPro" id="IPR008284">
    <property type="entry name" value="MoCF_biosynth_CS"/>
</dbReference>
<dbReference type="InterPro" id="IPR038987">
    <property type="entry name" value="MoeA-like"/>
</dbReference>
<dbReference type="InterPro" id="IPR005111">
    <property type="entry name" value="MoeA_C_domain_IV"/>
</dbReference>
<dbReference type="InterPro" id="IPR036688">
    <property type="entry name" value="MoeA_C_domain_IV_sf"/>
</dbReference>
<dbReference type="InterPro" id="IPR005110">
    <property type="entry name" value="MoeA_linker/N"/>
</dbReference>
<dbReference type="InterPro" id="IPR036135">
    <property type="entry name" value="MoeA_linker/N_sf"/>
</dbReference>
<dbReference type="NCBIfam" id="NF045515">
    <property type="entry name" value="Glp_gephyrin"/>
    <property type="match status" value="1"/>
</dbReference>
<dbReference type="NCBIfam" id="TIGR00177">
    <property type="entry name" value="molyb_syn"/>
    <property type="match status" value="1"/>
</dbReference>
<dbReference type="NCBIfam" id="NF007960">
    <property type="entry name" value="PRK10680.1"/>
    <property type="match status" value="1"/>
</dbReference>
<dbReference type="PANTHER" id="PTHR10192:SF5">
    <property type="entry name" value="GEPHYRIN"/>
    <property type="match status" value="1"/>
</dbReference>
<dbReference type="PANTHER" id="PTHR10192">
    <property type="entry name" value="MOLYBDOPTERIN BIOSYNTHESIS PROTEIN"/>
    <property type="match status" value="1"/>
</dbReference>
<dbReference type="Pfam" id="PF00994">
    <property type="entry name" value="MoCF_biosynth"/>
    <property type="match status" value="1"/>
</dbReference>
<dbReference type="Pfam" id="PF03454">
    <property type="entry name" value="MoeA_C"/>
    <property type="match status" value="1"/>
</dbReference>
<dbReference type="Pfam" id="PF03453">
    <property type="entry name" value="MoeA_N"/>
    <property type="match status" value="1"/>
</dbReference>
<dbReference type="SMART" id="SM00852">
    <property type="entry name" value="MoCF_biosynth"/>
    <property type="match status" value="1"/>
</dbReference>
<dbReference type="SUPFAM" id="SSF63867">
    <property type="entry name" value="MoeA C-terminal domain-like"/>
    <property type="match status" value="1"/>
</dbReference>
<dbReference type="SUPFAM" id="SSF63882">
    <property type="entry name" value="MoeA N-terminal region -like"/>
    <property type="match status" value="1"/>
</dbReference>
<dbReference type="SUPFAM" id="SSF53218">
    <property type="entry name" value="Molybdenum cofactor biosynthesis proteins"/>
    <property type="match status" value="1"/>
</dbReference>
<dbReference type="PROSITE" id="PS01079">
    <property type="entry name" value="MOCF_BIOSYNTHESIS_2"/>
    <property type="match status" value="1"/>
</dbReference>